<name>ANM11_ARATH</name>
<dbReference type="EC" id="2.1.1.319"/>
<dbReference type="EMBL" id="AL079344">
    <property type="protein sequence ID" value="CAB45311.1"/>
    <property type="molecule type" value="Genomic_DNA"/>
</dbReference>
<dbReference type="EMBL" id="AL161575">
    <property type="protein sequence ID" value="CAB79709.1"/>
    <property type="molecule type" value="Genomic_DNA"/>
</dbReference>
<dbReference type="EMBL" id="CP002687">
    <property type="protein sequence ID" value="AEE85638.1"/>
    <property type="molecule type" value="Genomic_DNA"/>
</dbReference>
<dbReference type="EMBL" id="AY150407">
    <property type="protein sequence ID" value="AAN12952.1"/>
    <property type="molecule type" value="mRNA"/>
</dbReference>
<dbReference type="EMBL" id="AY063970">
    <property type="protein sequence ID" value="AAL36326.1"/>
    <property type="molecule type" value="mRNA"/>
</dbReference>
<dbReference type="EMBL" id="AY087817">
    <property type="protein sequence ID" value="AAM65371.1"/>
    <property type="molecule type" value="mRNA"/>
</dbReference>
<dbReference type="EMBL" id="AJ007582">
    <property type="protein sequence ID" value="CAA07570.1"/>
    <property type="molecule type" value="mRNA"/>
</dbReference>
<dbReference type="PIR" id="T09914">
    <property type="entry name" value="T09914"/>
</dbReference>
<dbReference type="PIR" id="T52248">
    <property type="entry name" value="T52248"/>
</dbReference>
<dbReference type="RefSeq" id="NP_194680.1">
    <property type="nucleotide sequence ID" value="NM_119096.3"/>
</dbReference>
<dbReference type="SMR" id="Q9SU94"/>
<dbReference type="BioGRID" id="14359">
    <property type="interactions" value="9"/>
</dbReference>
<dbReference type="FunCoup" id="Q9SU94">
    <property type="interactions" value="3927"/>
</dbReference>
<dbReference type="IntAct" id="Q9SU94">
    <property type="interactions" value="5"/>
</dbReference>
<dbReference type="STRING" id="3702.Q9SU94"/>
<dbReference type="iPTMnet" id="Q9SU94"/>
<dbReference type="PaxDb" id="3702-AT4G29510.1"/>
<dbReference type="ProteomicsDB" id="244431"/>
<dbReference type="EnsemblPlants" id="AT4G29510.1">
    <property type="protein sequence ID" value="AT4G29510.1"/>
    <property type="gene ID" value="AT4G29510"/>
</dbReference>
<dbReference type="GeneID" id="829072"/>
<dbReference type="Gramene" id="AT4G29510.1">
    <property type="protein sequence ID" value="AT4G29510.1"/>
    <property type="gene ID" value="AT4G29510"/>
</dbReference>
<dbReference type="KEGG" id="ath:AT4G29510"/>
<dbReference type="Araport" id="AT4G29510"/>
<dbReference type="TAIR" id="AT4G29510">
    <property type="gene designation" value="PRMT11"/>
</dbReference>
<dbReference type="eggNOG" id="KOG1499">
    <property type="taxonomic scope" value="Eukaryota"/>
</dbReference>
<dbReference type="HOGENOM" id="CLU_017375_1_2_1"/>
<dbReference type="InParanoid" id="Q9SU94"/>
<dbReference type="OMA" id="CTHTKVK"/>
<dbReference type="PhylomeDB" id="Q9SU94"/>
<dbReference type="PRO" id="PR:Q9SU94"/>
<dbReference type="Proteomes" id="UP000006548">
    <property type="component" value="Chromosome 4"/>
</dbReference>
<dbReference type="ExpressionAtlas" id="Q9SU94">
    <property type="expression patterns" value="baseline and differential"/>
</dbReference>
<dbReference type="GO" id="GO:0005737">
    <property type="term" value="C:cytoplasm"/>
    <property type="evidence" value="ECO:0000314"/>
    <property type="project" value="UniProtKB"/>
</dbReference>
<dbReference type="GO" id="GO:0005634">
    <property type="term" value="C:nucleus"/>
    <property type="evidence" value="ECO:0000314"/>
    <property type="project" value="UniProtKB"/>
</dbReference>
<dbReference type="GO" id="GO:0016274">
    <property type="term" value="F:protein-arginine N-methyltransferase activity"/>
    <property type="evidence" value="ECO:0000314"/>
    <property type="project" value="TAIR"/>
</dbReference>
<dbReference type="GO" id="GO:0035242">
    <property type="term" value="F:protein-arginine omega-N asymmetric methyltransferase activity"/>
    <property type="evidence" value="ECO:0007669"/>
    <property type="project" value="UniProtKB-EC"/>
</dbReference>
<dbReference type="GO" id="GO:0006325">
    <property type="term" value="P:chromatin organization"/>
    <property type="evidence" value="ECO:0007669"/>
    <property type="project" value="UniProtKB-KW"/>
</dbReference>
<dbReference type="GO" id="GO:0032259">
    <property type="term" value="P:methylation"/>
    <property type="evidence" value="ECO:0007669"/>
    <property type="project" value="UniProtKB-KW"/>
</dbReference>
<dbReference type="CDD" id="cd02440">
    <property type="entry name" value="AdoMet_MTases"/>
    <property type="match status" value="1"/>
</dbReference>
<dbReference type="FunFam" id="2.70.160.11:FF:000001">
    <property type="entry name" value="Blast:Protein arginine N-methyltransferase 1"/>
    <property type="match status" value="1"/>
</dbReference>
<dbReference type="FunFam" id="3.40.50.150:FF:000116">
    <property type="entry name" value="probable protein arginine N-methyltransferase 1"/>
    <property type="match status" value="1"/>
</dbReference>
<dbReference type="Gene3D" id="2.70.160.11">
    <property type="entry name" value="Hnrnp arginine n-methyltransferase1"/>
    <property type="match status" value="1"/>
</dbReference>
<dbReference type="Gene3D" id="3.40.50.150">
    <property type="entry name" value="Vaccinia Virus protein VP39"/>
    <property type="match status" value="1"/>
</dbReference>
<dbReference type="InterPro" id="IPR025799">
    <property type="entry name" value="Arg_MeTrfase"/>
</dbReference>
<dbReference type="InterPro" id="IPR041698">
    <property type="entry name" value="Methyltransf_25"/>
</dbReference>
<dbReference type="InterPro" id="IPR055135">
    <property type="entry name" value="PRMT_dom"/>
</dbReference>
<dbReference type="InterPro" id="IPR029063">
    <property type="entry name" value="SAM-dependent_MTases_sf"/>
</dbReference>
<dbReference type="PANTHER" id="PTHR11006">
    <property type="entry name" value="PROTEIN ARGININE N-METHYLTRANSFERASE"/>
    <property type="match status" value="1"/>
</dbReference>
<dbReference type="PANTHER" id="PTHR11006:SF53">
    <property type="entry name" value="PROTEIN ARGININE N-METHYLTRANSFERASE 3"/>
    <property type="match status" value="1"/>
</dbReference>
<dbReference type="Pfam" id="PF13649">
    <property type="entry name" value="Methyltransf_25"/>
    <property type="match status" value="1"/>
</dbReference>
<dbReference type="Pfam" id="PF22528">
    <property type="entry name" value="PRMT_C"/>
    <property type="match status" value="1"/>
</dbReference>
<dbReference type="SUPFAM" id="SSF53335">
    <property type="entry name" value="S-adenosyl-L-methionine-dependent methyltransferases"/>
    <property type="match status" value="1"/>
</dbReference>
<dbReference type="PROSITE" id="PS51678">
    <property type="entry name" value="SAM_MT_PRMT"/>
    <property type="match status" value="1"/>
</dbReference>
<comment type="function">
    <text evidence="4 5">Methylates (mono and asymmetric dimethylation) the guanidino nitrogens of arginyl residues present in a glycine and arginine-rich domain. Type I arginine methyltransferase active on both histones and non-histone proteins. Required for leaves and flowers development. Mediates the methylation of MBD7 and MED36A.</text>
</comment>
<comment type="catalytic activity">
    <reaction>
        <text>L-arginyl-[protein] + 2 S-adenosyl-L-methionine = N(omega),N(omega)-dimethyl-L-arginyl-[protein] + 2 S-adenosyl-L-homocysteine + 2 H(+)</text>
        <dbReference type="Rhea" id="RHEA:48096"/>
        <dbReference type="Rhea" id="RHEA-COMP:10532"/>
        <dbReference type="Rhea" id="RHEA-COMP:11991"/>
        <dbReference type="ChEBI" id="CHEBI:15378"/>
        <dbReference type="ChEBI" id="CHEBI:29965"/>
        <dbReference type="ChEBI" id="CHEBI:57856"/>
        <dbReference type="ChEBI" id="CHEBI:59789"/>
        <dbReference type="ChEBI" id="CHEBI:61897"/>
        <dbReference type="EC" id="2.1.1.319"/>
    </reaction>
</comment>
<comment type="subunit">
    <text evidence="4 5">Interacts with PRMT12, MBD7 and FIB2.</text>
</comment>
<comment type="subcellular location">
    <subcellularLocation>
        <location>Nucleus</location>
    </subcellularLocation>
    <subcellularLocation>
        <location>Cytoplasm</location>
    </subcellularLocation>
    <text>Excluded from nucleolus.</text>
</comment>
<comment type="disruption phenotype">
    <text evidence="5">Reduced levels of proteins with asymmetrically dimethylated arginines. Altered leaf morphology and development (curled leaves), multiple rosettes with an increased number of leaves, delayed flowering, disturbed inflorescence morphology, increased sterility.</text>
</comment>
<comment type="similarity">
    <text evidence="2">Belongs to the class I-like SAM-binding methyltransferase superfamily. Protein arginine N-methyltransferase family.</text>
</comment>
<protein>
    <recommendedName>
        <fullName>Protein arginine N-methyltransferase 1.1</fullName>
        <shortName>AtPRMT11</shortName>
        <ecNumber>2.1.1.319</ecNumber>
    </recommendedName>
    <alternativeName>
        <fullName>Arginine methyltransferase pam1</fullName>
    </alternativeName>
    <alternativeName>
        <fullName>Histone-arginine N-methyltransferase PRMT11</fullName>
    </alternativeName>
</protein>
<sequence length="390" mass="43894">MTKNSNHDENEFISFEPNQNTKIRFEDADEDEVAEGSGVAGEETPQDESMFDAGESADTAEVTDDTTSADYYFDSYSHFGIHEEMLKDVVRTKTYQNVIYQNKFLIKDKIVLDVGAGTGILSLFCAKAGAAHVYAVECSQMADMAKEIVKANGFSDVITVLKGKIEEIELPTPKVDVIISEWMGYFLLFENMLDSVLYARDKWLVEGGVVLPDKASLHLTAIEDSEYKEDKIEFWNSVYGFDMSCIKKKAMMEPLVDTVDQNQIVTDSRLLKTMDISKMSSGDASFTAPFKLVAQRNDYIHALVAYFDVSFTMCHKLLGFSTGPKSRATHWKQTVLYLEDVLTICEGETITGTMSVSPNKKNPRDIDIKLSYSLNGQHCKISRTQHYKMR</sequence>
<gene>
    <name type="primary">PRMT11</name>
    <name type="synonym">PAM1</name>
    <name type="synonym">PRMT1.1</name>
    <name type="synonym">PRMT1B</name>
    <name type="ordered locus">At4g29510</name>
    <name type="ORF">T16L4.20</name>
</gene>
<evidence type="ECO:0000250" key="1"/>
<evidence type="ECO:0000255" key="2">
    <source>
        <dbReference type="PROSITE-ProRule" id="PRU01015"/>
    </source>
</evidence>
<evidence type="ECO:0000256" key="3">
    <source>
        <dbReference type="SAM" id="MobiDB-lite"/>
    </source>
</evidence>
<evidence type="ECO:0000269" key="4">
    <source>
    </source>
</evidence>
<evidence type="ECO:0000269" key="5">
    <source>
    </source>
</evidence>
<evidence type="ECO:0000305" key="6"/>
<reference key="1">
    <citation type="journal article" date="1999" name="Nature">
        <title>Sequence and analysis of chromosome 4 of the plant Arabidopsis thaliana.</title>
        <authorList>
            <person name="Mayer K.F.X."/>
            <person name="Schueller C."/>
            <person name="Wambutt R."/>
            <person name="Murphy G."/>
            <person name="Volckaert G."/>
            <person name="Pohl T."/>
            <person name="Duesterhoeft A."/>
            <person name="Stiekema W."/>
            <person name="Entian K.-D."/>
            <person name="Terryn N."/>
            <person name="Harris B."/>
            <person name="Ansorge W."/>
            <person name="Brandt P."/>
            <person name="Grivell L.A."/>
            <person name="Rieger M."/>
            <person name="Weichselgartner M."/>
            <person name="de Simone V."/>
            <person name="Obermaier B."/>
            <person name="Mache R."/>
            <person name="Mueller M."/>
            <person name="Kreis M."/>
            <person name="Delseny M."/>
            <person name="Puigdomenech P."/>
            <person name="Watson M."/>
            <person name="Schmidtheini T."/>
            <person name="Reichert B."/>
            <person name="Portetelle D."/>
            <person name="Perez-Alonso M."/>
            <person name="Boutry M."/>
            <person name="Bancroft I."/>
            <person name="Vos P."/>
            <person name="Hoheisel J."/>
            <person name="Zimmermann W."/>
            <person name="Wedler H."/>
            <person name="Ridley P."/>
            <person name="Langham S.-A."/>
            <person name="McCullagh B."/>
            <person name="Bilham L."/>
            <person name="Robben J."/>
            <person name="van der Schueren J."/>
            <person name="Grymonprez B."/>
            <person name="Chuang Y.-J."/>
            <person name="Vandenbussche F."/>
            <person name="Braeken M."/>
            <person name="Weltjens I."/>
            <person name="Voet M."/>
            <person name="Bastiaens I."/>
            <person name="Aert R."/>
            <person name="Defoor E."/>
            <person name="Weitzenegger T."/>
            <person name="Bothe G."/>
            <person name="Ramsperger U."/>
            <person name="Hilbert H."/>
            <person name="Braun M."/>
            <person name="Holzer E."/>
            <person name="Brandt A."/>
            <person name="Peters S."/>
            <person name="van Staveren M."/>
            <person name="Dirkse W."/>
            <person name="Mooijman P."/>
            <person name="Klein Lankhorst R."/>
            <person name="Rose M."/>
            <person name="Hauf J."/>
            <person name="Koetter P."/>
            <person name="Berneiser S."/>
            <person name="Hempel S."/>
            <person name="Feldpausch M."/>
            <person name="Lamberth S."/>
            <person name="Van den Daele H."/>
            <person name="De Keyser A."/>
            <person name="Buysshaert C."/>
            <person name="Gielen J."/>
            <person name="Villarroel R."/>
            <person name="De Clercq R."/>
            <person name="van Montagu M."/>
            <person name="Rogers J."/>
            <person name="Cronin A."/>
            <person name="Quail M.A."/>
            <person name="Bray-Allen S."/>
            <person name="Clark L."/>
            <person name="Doggett J."/>
            <person name="Hall S."/>
            <person name="Kay M."/>
            <person name="Lennard N."/>
            <person name="McLay K."/>
            <person name="Mayes R."/>
            <person name="Pettett A."/>
            <person name="Rajandream M.A."/>
            <person name="Lyne M."/>
            <person name="Benes V."/>
            <person name="Rechmann S."/>
            <person name="Borkova D."/>
            <person name="Bloecker H."/>
            <person name="Scharfe M."/>
            <person name="Grimm M."/>
            <person name="Loehnert T.-H."/>
            <person name="Dose S."/>
            <person name="de Haan M."/>
            <person name="Maarse A.C."/>
            <person name="Schaefer M."/>
            <person name="Mueller-Auer S."/>
            <person name="Gabel C."/>
            <person name="Fuchs M."/>
            <person name="Fartmann B."/>
            <person name="Granderath K."/>
            <person name="Dauner D."/>
            <person name="Herzl A."/>
            <person name="Neumann S."/>
            <person name="Argiriou A."/>
            <person name="Vitale D."/>
            <person name="Liguori R."/>
            <person name="Piravandi E."/>
            <person name="Massenet O."/>
            <person name="Quigley F."/>
            <person name="Clabauld G."/>
            <person name="Muendlein A."/>
            <person name="Felber R."/>
            <person name="Schnabl S."/>
            <person name="Hiller R."/>
            <person name="Schmidt W."/>
            <person name="Lecharny A."/>
            <person name="Aubourg S."/>
            <person name="Chefdor F."/>
            <person name="Cooke R."/>
            <person name="Berger C."/>
            <person name="Monfort A."/>
            <person name="Casacuberta E."/>
            <person name="Gibbons T."/>
            <person name="Weber N."/>
            <person name="Vandenbol M."/>
            <person name="Bargues M."/>
            <person name="Terol J."/>
            <person name="Torres A."/>
            <person name="Perez-Perez A."/>
            <person name="Purnelle B."/>
            <person name="Bent E."/>
            <person name="Johnson S."/>
            <person name="Tacon D."/>
            <person name="Jesse T."/>
            <person name="Heijnen L."/>
            <person name="Schwarz S."/>
            <person name="Scholler P."/>
            <person name="Heber S."/>
            <person name="Francs P."/>
            <person name="Bielke C."/>
            <person name="Frishman D."/>
            <person name="Haase D."/>
            <person name="Lemcke K."/>
            <person name="Mewes H.-W."/>
            <person name="Stocker S."/>
            <person name="Zaccaria P."/>
            <person name="Bevan M."/>
            <person name="Wilson R.K."/>
            <person name="de la Bastide M."/>
            <person name="Habermann K."/>
            <person name="Parnell L."/>
            <person name="Dedhia N."/>
            <person name="Gnoj L."/>
            <person name="Schutz K."/>
            <person name="Huang E."/>
            <person name="Spiegel L."/>
            <person name="Sekhon M."/>
            <person name="Murray J."/>
            <person name="Sheet P."/>
            <person name="Cordes M."/>
            <person name="Abu-Threideh J."/>
            <person name="Stoneking T."/>
            <person name="Kalicki J."/>
            <person name="Graves T."/>
            <person name="Harmon G."/>
            <person name="Edwards J."/>
            <person name="Latreille P."/>
            <person name="Courtney L."/>
            <person name="Cloud J."/>
            <person name="Abbott A."/>
            <person name="Scott K."/>
            <person name="Johnson D."/>
            <person name="Minx P."/>
            <person name="Bentley D."/>
            <person name="Fulton B."/>
            <person name="Miller N."/>
            <person name="Greco T."/>
            <person name="Kemp K."/>
            <person name="Kramer J."/>
            <person name="Fulton L."/>
            <person name="Mardis E."/>
            <person name="Dante M."/>
            <person name="Pepin K."/>
            <person name="Hillier L.W."/>
            <person name="Nelson J."/>
            <person name="Spieth J."/>
            <person name="Ryan E."/>
            <person name="Andrews S."/>
            <person name="Geisel C."/>
            <person name="Layman D."/>
            <person name="Du H."/>
            <person name="Ali J."/>
            <person name="Berghoff A."/>
            <person name="Jones K."/>
            <person name="Drone K."/>
            <person name="Cotton M."/>
            <person name="Joshu C."/>
            <person name="Antonoiu B."/>
            <person name="Zidanic M."/>
            <person name="Strong C."/>
            <person name="Sun H."/>
            <person name="Lamar B."/>
            <person name="Yordan C."/>
            <person name="Ma P."/>
            <person name="Zhong J."/>
            <person name="Preston R."/>
            <person name="Vil D."/>
            <person name="Shekher M."/>
            <person name="Matero A."/>
            <person name="Shah R."/>
            <person name="Swaby I.K."/>
            <person name="O'Shaughnessy A."/>
            <person name="Rodriguez M."/>
            <person name="Hoffman J."/>
            <person name="Till S."/>
            <person name="Granat S."/>
            <person name="Shohdy N."/>
            <person name="Hasegawa A."/>
            <person name="Hameed A."/>
            <person name="Lodhi M."/>
            <person name="Johnson A."/>
            <person name="Chen E."/>
            <person name="Marra M.A."/>
            <person name="Martienssen R."/>
            <person name="McCombie W.R."/>
        </authorList>
    </citation>
    <scope>NUCLEOTIDE SEQUENCE [LARGE SCALE GENOMIC DNA]</scope>
    <source>
        <strain>cv. Columbia</strain>
    </source>
</reference>
<reference key="2">
    <citation type="journal article" date="2017" name="Plant J.">
        <title>Araport11: a complete reannotation of the Arabidopsis thaliana reference genome.</title>
        <authorList>
            <person name="Cheng C.Y."/>
            <person name="Krishnakumar V."/>
            <person name="Chan A.P."/>
            <person name="Thibaud-Nissen F."/>
            <person name="Schobel S."/>
            <person name="Town C.D."/>
        </authorList>
    </citation>
    <scope>GENOME REANNOTATION</scope>
    <source>
        <strain>cv. Columbia</strain>
    </source>
</reference>
<reference key="3">
    <citation type="journal article" date="2003" name="Science">
        <title>Empirical analysis of transcriptional activity in the Arabidopsis genome.</title>
        <authorList>
            <person name="Yamada K."/>
            <person name="Lim J."/>
            <person name="Dale J.M."/>
            <person name="Chen H."/>
            <person name="Shinn P."/>
            <person name="Palm C.J."/>
            <person name="Southwick A.M."/>
            <person name="Wu H.C."/>
            <person name="Kim C.J."/>
            <person name="Nguyen M."/>
            <person name="Pham P.K."/>
            <person name="Cheuk R.F."/>
            <person name="Karlin-Newmann G."/>
            <person name="Liu S.X."/>
            <person name="Lam B."/>
            <person name="Sakano H."/>
            <person name="Wu T."/>
            <person name="Yu G."/>
            <person name="Miranda M."/>
            <person name="Quach H.L."/>
            <person name="Tripp M."/>
            <person name="Chang C.H."/>
            <person name="Lee J.M."/>
            <person name="Toriumi M.J."/>
            <person name="Chan M.M."/>
            <person name="Tang C.C."/>
            <person name="Onodera C.S."/>
            <person name="Deng J.M."/>
            <person name="Akiyama K."/>
            <person name="Ansari Y."/>
            <person name="Arakawa T."/>
            <person name="Banh J."/>
            <person name="Banno F."/>
            <person name="Bowser L."/>
            <person name="Brooks S.Y."/>
            <person name="Carninci P."/>
            <person name="Chao Q."/>
            <person name="Choy N."/>
            <person name="Enju A."/>
            <person name="Goldsmith A.D."/>
            <person name="Gurjal M."/>
            <person name="Hansen N.F."/>
            <person name="Hayashizaki Y."/>
            <person name="Johnson-Hopson C."/>
            <person name="Hsuan V.W."/>
            <person name="Iida K."/>
            <person name="Karnes M."/>
            <person name="Khan S."/>
            <person name="Koesema E."/>
            <person name="Ishida J."/>
            <person name="Jiang P.X."/>
            <person name="Jones T."/>
            <person name="Kawai J."/>
            <person name="Kamiya A."/>
            <person name="Meyers C."/>
            <person name="Nakajima M."/>
            <person name="Narusaka M."/>
            <person name="Seki M."/>
            <person name="Sakurai T."/>
            <person name="Satou M."/>
            <person name="Tamse R."/>
            <person name="Vaysberg M."/>
            <person name="Wallender E.K."/>
            <person name="Wong C."/>
            <person name="Yamamura Y."/>
            <person name="Yuan S."/>
            <person name="Shinozaki K."/>
            <person name="Davis R.W."/>
            <person name="Theologis A."/>
            <person name="Ecker J.R."/>
        </authorList>
    </citation>
    <scope>NUCLEOTIDE SEQUENCE [LARGE SCALE MRNA]</scope>
    <source>
        <strain>cv. Columbia</strain>
    </source>
</reference>
<reference key="4">
    <citation type="submission" date="2002-03" db="EMBL/GenBank/DDBJ databases">
        <title>Full-length cDNA from Arabidopsis thaliana.</title>
        <authorList>
            <person name="Brover V.V."/>
            <person name="Troukhan M.E."/>
            <person name="Alexandrov N.A."/>
            <person name="Lu Y.-P."/>
            <person name="Flavell R.B."/>
            <person name="Feldmann K.A."/>
        </authorList>
    </citation>
    <scope>NUCLEOTIDE SEQUENCE [LARGE SCALE MRNA]</scope>
</reference>
<reference key="5">
    <citation type="submission" date="1998-07" db="EMBL/GenBank/DDBJ databases">
        <title>Identification and isolation of the first protein arginine methyltransferase from Arabidopsis thaliana.</title>
        <authorList>
            <person name="Salchert K."/>
            <person name="Breuer F."/>
            <person name="Koncz C."/>
        </authorList>
    </citation>
    <scope>NUCLEOTIDE SEQUENCE [MRNA] OF 1-376</scope>
    <source>
        <strain>cv. Columbia</strain>
    </source>
</reference>
<reference key="6">
    <citation type="journal article" date="2007" name="Biochem. J.">
        <title>Identification and characterization of two closely related histone H4 arginine 3 methyltransferases in Arabidopsis thaliana.</title>
        <authorList>
            <person name="Yan D."/>
            <person name="Zhang Y."/>
            <person name="Niu L."/>
            <person name="Yuan Y."/>
            <person name="Cao X."/>
        </authorList>
    </citation>
    <scope>FUNCTION</scope>
    <scope>INTERACTION WITH PRMT12 AND FIB2</scope>
    <scope>SUBCELLULAR LOCATION</scope>
</reference>
<reference key="7">
    <citation type="journal article" date="2007" name="Pharmacol. Ther.">
        <title>Protein arginine methyltransferases: evolution and assessment of their pharmacological and therapeutic potential.</title>
        <authorList>
            <person name="Krause C.D."/>
            <person name="Yang Z.-H."/>
            <person name="Kim Y.-S."/>
            <person name="Lee J.-H."/>
            <person name="Cook J.R."/>
            <person name="Pestka S."/>
        </authorList>
    </citation>
    <scope>GENE FAMILY</scope>
    <scope>NOMENCLATURE</scope>
</reference>
<reference key="8">
    <citation type="journal article" date="2007" name="Plant J.">
        <title>PRMT11: a new Arabidopsis MBD7 protein partner with arginine methyltransferase activity.</title>
        <authorList>
            <person name="Scebba F."/>
            <person name="De Bastiani M."/>
            <person name="Bernacchia G."/>
            <person name="Andreucci A."/>
            <person name="Galli A."/>
            <person name="Pitto L."/>
        </authorList>
    </citation>
    <scope>FUNCTION</scope>
    <scope>DISRUPTION PHENOTYPE</scope>
    <scope>INTERACTION WITH MBD7</scope>
    <scope>SUBCELLULAR LOCATION</scope>
    <source>
        <strain>cv. Columbia</strain>
        <strain>cv. Landsberg erecta</strain>
    </source>
</reference>
<proteinExistence type="evidence at protein level"/>
<feature type="chain" id="PRO_0000293986" description="Protein arginine N-methyltransferase 1.1">
    <location>
        <begin position="1"/>
        <end position="390"/>
    </location>
</feature>
<feature type="domain" description="SAM-dependent MTase PRMT-type" evidence="2">
    <location>
        <begin position="69"/>
        <end position="390"/>
    </location>
</feature>
<feature type="region of interest" description="Disordered" evidence="3">
    <location>
        <begin position="1"/>
        <end position="59"/>
    </location>
</feature>
<feature type="compositionally biased region" description="Basic and acidic residues" evidence="3">
    <location>
        <begin position="1"/>
        <end position="10"/>
    </location>
</feature>
<feature type="active site" evidence="1">
    <location>
        <position position="181"/>
    </location>
</feature>
<feature type="active site" evidence="1">
    <location>
        <position position="190"/>
    </location>
</feature>
<feature type="sequence conflict" description="In Ref. 3; AAL36326." evidence="6" ref="3">
    <original>D</original>
    <variation>G</variation>
    <location>
        <position position="260"/>
    </location>
</feature>
<accession>Q9SU94</accession>
<accession>O81813</accession>
<accession>Q8VZP0</accession>
<organism>
    <name type="scientific">Arabidopsis thaliana</name>
    <name type="common">Mouse-ear cress</name>
    <dbReference type="NCBI Taxonomy" id="3702"/>
    <lineage>
        <taxon>Eukaryota</taxon>
        <taxon>Viridiplantae</taxon>
        <taxon>Streptophyta</taxon>
        <taxon>Embryophyta</taxon>
        <taxon>Tracheophyta</taxon>
        <taxon>Spermatophyta</taxon>
        <taxon>Magnoliopsida</taxon>
        <taxon>eudicotyledons</taxon>
        <taxon>Gunneridae</taxon>
        <taxon>Pentapetalae</taxon>
        <taxon>rosids</taxon>
        <taxon>malvids</taxon>
        <taxon>Brassicales</taxon>
        <taxon>Brassicaceae</taxon>
        <taxon>Camelineae</taxon>
        <taxon>Arabidopsis</taxon>
    </lineage>
</organism>
<keyword id="KW-0156">Chromatin regulator</keyword>
<keyword id="KW-0963">Cytoplasm</keyword>
<keyword id="KW-0489">Methyltransferase</keyword>
<keyword id="KW-0539">Nucleus</keyword>
<keyword id="KW-1185">Reference proteome</keyword>
<keyword id="KW-0949">S-adenosyl-L-methionine</keyword>
<keyword id="KW-0804">Transcription</keyword>
<keyword id="KW-0805">Transcription regulation</keyword>
<keyword id="KW-0808">Transferase</keyword>